<proteinExistence type="inferred from homology"/>
<evidence type="ECO:0000255" key="1">
    <source>
        <dbReference type="HAMAP-Rule" id="MF_00275"/>
    </source>
</evidence>
<accession>Q8F1M1</accession>
<feature type="chain" id="PRO_0000166502" description="Potassium-transporting ATPase potassium-binding subunit">
    <location>
        <begin position="1"/>
        <end position="557"/>
    </location>
</feature>
<feature type="transmembrane region" description="Helical" evidence="1">
    <location>
        <begin position="6"/>
        <end position="26"/>
    </location>
</feature>
<feature type="transmembrane region" description="Helical" evidence="1">
    <location>
        <begin position="59"/>
        <end position="79"/>
    </location>
</feature>
<feature type="transmembrane region" description="Helical" evidence="1">
    <location>
        <begin position="127"/>
        <end position="147"/>
    </location>
</feature>
<feature type="transmembrane region" description="Helical" evidence="1">
    <location>
        <begin position="172"/>
        <end position="192"/>
    </location>
</feature>
<feature type="transmembrane region" description="Helical" evidence="1">
    <location>
        <begin position="247"/>
        <end position="267"/>
    </location>
</feature>
<feature type="transmembrane region" description="Helical" evidence="1">
    <location>
        <begin position="278"/>
        <end position="298"/>
    </location>
</feature>
<feature type="transmembrane region" description="Helical" evidence="1">
    <location>
        <begin position="363"/>
        <end position="383"/>
    </location>
</feature>
<feature type="transmembrane region" description="Helical" evidence="1">
    <location>
        <begin position="410"/>
        <end position="430"/>
    </location>
</feature>
<feature type="transmembrane region" description="Helical" evidence="1">
    <location>
        <begin position="475"/>
        <end position="495"/>
    </location>
</feature>
<feature type="transmembrane region" description="Helical" evidence="1">
    <location>
        <begin position="520"/>
        <end position="540"/>
    </location>
</feature>
<organism>
    <name type="scientific">Leptospira interrogans serogroup Icterohaemorrhagiae serovar Lai (strain 56601)</name>
    <dbReference type="NCBI Taxonomy" id="189518"/>
    <lineage>
        <taxon>Bacteria</taxon>
        <taxon>Pseudomonadati</taxon>
        <taxon>Spirochaetota</taxon>
        <taxon>Spirochaetia</taxon>
        <taxon>Leptospirales</taxon>
        <taxon>Leptospiraceae</taxon>
        <taxon>Leptospira</taxon>
    </lineage>
</organism>
<name>KDPA_LEPIN</name>
<reference key="1">
    <citation type="journal article" date="2003" name="Nature">
        <title>Unique physiological and pathogenic features of Leptospira interrogans revealed by whole-genome sequencing.</title>
        <authorList>
            <person name="Ren S.-X."/>
            <person name="Fu G."/>
            <person name="Jiang X.-G."/>
            <person name="Zeng R."/>
            <person name="Miao Y.-G."/>
            <person name="Xu H."/>
            <person name="Zhang Y.-X."/>
            <person name="Xiong H."/>
            <person name="Lu G."/>
            <person name="Lu L.-F."/>
            <person name="Jiang H.-Q."/>
            <person name="Jia J."/>
            <person name="Tu Y.-F."/>
            <person name="Jiang J.-X."/>
            <person name="Gu W.-Y."/>
            <person name="Zhang Y.-Q."/>
            <person name="Cai Z."/>
            <person name="Sheng H.-H."/>
            <person name="Yin H.-F."/>
            <person name="Zhang Y."/>
            <person name="Zhu G.-F."/>
            <person name="Wan M."/>
            <person name="Huang H.-L."/>
            <person name="Qian Z."/>
            <person name="Wang S.-Y."/>
            <person name="Ma W."/>
            <person name="Yao Z.-J."/>
            <person name="Shen Y."/>
            <person name="Qiang B.-Q."/>
            <person name="Xia Q.-C."/>
            <person name="Guo X.-K."/>
            <person name="Danchin A."/>
            <person name="Saint Girons I."/>
            <person name="Somerville R.L."/>
            <person name="Wen Y.-M."/>
            <person name="Shi M.-H."/>
            <person name="Chen Z."/>
            <person name="Xu J.-G."/>
            <person name="Zhao G.-P."/>
        </authorList>
    </citation>
    <scope>NUCLEOTIDE SEQUENCE [LARGE SCALE GENOMIC DNA]</scope>
    <source>
        <strain>56601</strain>
    </source>
</reference>
<keyword id="KW-0997">Cell inner membrane</keyword>
<keyword id="KW-1003">Cell membrane</keyword>
<keyword id="KW-0406">Ion transport</keyword>
<keyword id="KW-0472">Membrane</keyword>
<keyword id="KW-0630">Potassium</keyword>
<keyword id="KW-0633">Potassium transport</keyword>
<keyword id="KW-1185">Reference proteome</keyword>
<keyword id="KW-0812">Transmembrane</keyword>
<keyword id="KW-1133">Transmembrane helix</keyword>
<keyword id="KW-0813">Transport</keyword>
<comment type="function">
    <text evidence="1">Part of the high-affinity ATP-driven potassium transport (or Kdp) system, which catalyzes the hydrolysis of ATP coupled with the electrogenic transport of potassium into the cytoplasm. This subunit binds the periplasmic potassium ions and delivers the ions to the membrane domain of KdpB through an intramembrane tunnel.</text>
</comment>
<comment type="subunit">
    <text evidence="1">The system is composed of three essential subunits: KdpA, KdpB and KdpC.</text>
</comment>
<comment type="subcellular location">
    <subcellularLocation>
        <location evidence="1">Cell inner membrane</location>
        <topology evidence="1">Multi-pass membrane protein</topology>
    </subcellularLocation>
</comment>
<comment type="similarity">
    <text evidence="1">Belongs to the KdpA family.</text>
</comment>
<dbReference type="EMBL" id="AE010300">
    <property type="protein sequence ID" value="AAN50310.1"/>
    <property type="molecule type" value="Genomic_DNA"/>
</dbReference>
<dbReference type="RefSeq" id="NP_713292.1">
    <property type="nucleotide sequence ID" value="NC_004342.2"/>
</dbReference>
<dbReference type="RefSeq" id="WP_000255834.1">
    <property type="nucleotide sequence ID" value="NC_004342.2"/>
</dbReference>
<dbReference type="SMR" id="Q8F1M1"/>
<dbReference type="FunCoup" id="Q8F1M1">
    <property type="interactions" value="126"/>
</dbReference>
<dbReference type="STRING" id="189518.LA_3112"/>
<dbReference type="PaxDb" id="189518-LA_3112"/>
<dbReference type="EnsemblBacteria" id="AAN50310">
    <property type="protein sequence ID" value="AAN50310"/>
    <property type="gene ID" value="LA_3112"/>
</dbReference>
<dbReference type="KEGG" id="lil:LA_3112"/>
<dbReference type="PATRIC" id="fig|189518.3.peg.3092"/>
<dbReference type="HOGENOM" id="CLU_018614_3_0_12"/>
<dbReference type="InParanoid" id="Q8F1M1"/>
<dbReference type="OrthoDB" id="9763796at2"/>
<dbReference type="Proteomes" id="UP000001408">
    <property type="component" value="Chromosome I"/>
</dbReference>
<dbReference type="GO" id="GO:0005886">
    <property type="term" value="C:plasma membrane"/>
    <property type="evidence" value="ECO:0000318"/>
    <property type="project" value="GO_Central"/>
</dbReference>
<dbReference type="GO" id="GO:0008556">
    <property type="term" value="F:P-type potassium transmembrane transporter activity"/>
    <property type="evidence" value="ECO:0000318"/>
    <property type="project" value="GO_Central"/>
</dbReference>
<dbReference type="GO" id="GO:0030955">
    <property type="term" value="F:potassium ion binding"/>
    <property type="evidence" value="ECO:0007669"/>
    <property type="project" value="UniProtKB-UniRule"/>
</dbReference>
<dbReference type="GO" id="GO:0071805">
    <property type="term" value="P:potassium ion transmembrane transport"/>
    <property type="evidence" value="ECO:0000318"/>
    <property type="project" value="GO_Central"/>
</dbReference>
<dbReference type="HAMAP" id="MF_00275">
    <property type="entry name" value="KdpA"/>
    <property type="match status" value="1"/>
</dbReference>
<dbReference type="InterPro" id="IPR004623">
    <property type="entry name" value="KdpA"/>
</dbReference>
<dbReference type="NCBIfam" id="TIGR00680">
    <property type="entry name" value="kdpA"/>
    <property type="match status" value="1"/>
</dbReference>
<dbReference type="PANTHER" id="PTHR30607">
    <property type="entry name" value="POTASSIUM-TRANSPORTING ATPASE A CHAIN"/>
    <property type="match status" value="1"/>
</dbReference>
<dbReference type="PANTHER" id="PTHR30607:SF2">
    <property type="entry name" value="POTASSIUM-TRANSPORTING ATPASE POTASSIUM-BINDING SUBUNIT"/>
    <property type="match status" value="1"/>
</dbReference>
<dbReference type="Pfam" id="PF03814">
    <property type="entry name" value="KdpA"/>
    <property type="match status" value="1"/>
</dbReference>
<dbReference type="PIRSF" id="PIRSF001294">
    <property type="entry name" value="K_ATPaseA"/>
    <property type="match status" value="1"/>
</dbReference>
<sequence>MVTEWIQLLIFLFALLIFSPLFGLGLYKVYLYKTSGFEKFLYKICGIDPNRNMDWKEYALSLLVFNFFGFLLLFLILFFQNYLPLNPENFPGLVWDLAFNTAVSFATNTNWQAYSGESTLSFFSQMAGLTTQNFLSATTGLCVLLALSRGISVNYNVFALGNFWKDMIRGTLYVLLPLSFIFALFLVGFGVVQTFSESVSAITLEGNTQIIPLGPVASQVAIKQLGTNGGGYFGVNASHPFENPSPISNFLQMFSILILPGACVFLYGRITGSIRHAWAIFSVMFTILCVGILIVWTFESSWNPISGTLGFWEGKEIRFGILNSSIWEVATTVASNGSVNSMHDSFSPIGGLVGILNIQLREIVFGGVGAGMYGMILFVLLTVFLSGIMVGRSPEYLGKKIEKREIQMSILGILLPSTIILLFTAISVSVSDALSSLTNRGPHGLSEILYAFSSGAGNNGSAFAGLNANTTYYNVMIAIAMILGRFGVILPVLVIAGSLAQKKRSEIVSEGSFSTEGGTFYILLLSVIIIVGALTFFPVLTIGPILEHFIMFQNLTF</sequence>
<protein>
    <recommendedName>
        <fullName evidence="1">Potassium-transporting ATPase potassium-binding subunit</fullName>
    </recommendedName>
    <alternativeName>
        <fullName evidence="1">ATP phosphohydrolase [potassium-transporting] A chain</fullName>
    </alternativeName>
    <alternativeName>
        <fullName evidence="1">Potassium-binding and translocating subunit A</fullName>
    </alternativeName>
    <alternativeName>
        <fullName evidence="1">Potassium-translocating ATPase A chain</fullName>
    </alternativeName>
</protein>
<gene>
    <name evidence="1" type="primary">kdpA</name>
    <name type="ordered locus">LA_3112</name>
</gene>